<reference key="1">
    <citation type="submission" date="2001-05" db="EMBL/GenBank/DDBJ databases">
        <title>An analysis of forty genes encoding electron transport proteins from Synechococcus sp. PCC 7002: a comparative study of electron transport proteins from cyanobacteria and chloroplasts.</title>
        <authorList>
            <person name="Nomura C.T."/>
            <person name="Persson S."/>
            <person name="Zhao J."/>
            <person name="Bryant D.A."/>
        </authorList>
    </citation>
    <scope>NUCLEOTIDE SEQUENCE [GENOMIC DNA]</scope>
</reference>
<reference key="2">
    <citation type="submission" date="2008-02" db="EMBL/GenBank/DDBJ databases">
        <title>Complete sequence of Synechococcus sp. PCC 7002.</title>
        <authorList>
            <person name="Li T."/>
            <person name="Zhao J."/>
            <person name="Zhao C."/>
            <person name="Liu Z."/>
            <person name="Zhao F."/>
            <person name="Marquardt J."/>
            <person name="Nomura C.T."/>
            <person name="Persson S."/>
            <person name="Detter J.C."/>
            <person name="Richardson P.M."/>
            <person name="Lanz C."/>
            <person name="Schuster S.C."/>
            <person name="Wang J."/>
            <person name="Li S."/>
            <person name="Huang X."/>
            <person name="Cai T."/>
            <person name="Yu Z."/>
            <person name="Luo J."/>
            <person name="Zhao J."/>
            <person name="Bryant D.A."/>
        </authorList>
    </citation>
    <scope>NUCLEOTIDE SEQUENCE [LARGE SCALE GENOMIC DNA]</scope>
    <source>
        <strain>ATCC 27264 / PCC 7002 / PR-6</strain>
    </source>
</reference>
<feature type="chain" id="PRO_0000358206" description="NAD(P)H-quinone oxidoreductase subunit J">
    <location>
        <begin position="1"/>
        <end position="174"/>
    </location>
</feature>
<proteinExistence type="inferred from homology"/>
<protein>
    <recommendedName>
        <fullName evidence="1">NAD(P)H-quinone oxidoreductase subunit J</fullName>
        <ecNumber evidence="1">7.1.1.-</ecNumber>
    </recommendedName>
    <alternativeName>
        <fullName>NAD(P)H dehydrogenase subunit J</fullName>
    </alternativeName>
    <alternativeName>
        <fullName evidence="1">NADH-plastoquinone oxidoreductase subunit J</fullName>
    </alternativeName>
    <alternativeName>
        <fullName evidence="1">NDH-1 subunit J</fullName>
        <shortName evidence="1">NDH-J</shortName>
    </alternativeName>
</protein>
<name>NDHJ_PICP2</name>
<keyword id="KW-0472">Membrane</keyword>
<keyword id="KW-0520">NAD</keyword>
<keyword id="KW-0521">NADP</keyword>
<keyword id="KW-0618">Plastoquinone</keyword>
<keyword id="KW-0874">Quinone</keyword>
<keyword id="KW-1185">Reference proteome</keyword>
<keyword id="KW-0793">Thylakoid</keyword>
<keyword id="KW-1278">Translocase</keyword>
<keyword id="KW-0813">Transport</keyword>
<sequence length="174" mass="19945">MAEENQNPTPEEAAIVEAGAVSQLLTENGFSHESLERDHSGIEIIKVDADLLIPLCTALYAFGFNYLQCQGAYDLGPGKELVSFYHLLKVGDNVTDPEEVRVKVFLPRENPVVPSVYWIWKGADWQERESYDMYGIVYEGHPNLKRILMPEDWIGWPLRKDYVSPDFYELQDAY</sequence>
<organism>
    <name type="scientific">Picosynechococcus sp. (strain ATCC 27264 / PCC 7002 / PR-6)</name>
    <name type="common">Agmenellum quadruplicatum</name>
    <dbReference type="NCBI Taxonomy" id="32049"/>
    <lineage>
        <taxon>Bacteria</taxon>
        <taxon>Bacillati</taxon>
        <taxon>Cyanobacteriota</taxon>
        <taxon>Cyanophyceae</taxon>
        <taxon>Oscillatoriophycideae</taxon>
        <taxon>Chroococcales</taxon>
        <taxon>Geminocystaceae</taxon>
        <taxon>Picosynechococcus</taxon>
    </lineage>
</organism>
<dbReference type="EC" id="7.1.1.-" evidence="1"/>
<dbReference type="EMBL" id="AF381040">
    <property type="protein sequence ID" value="AAN03555.1"/>
    <property type="molecule type" value="Genomic_DNA"/>
</dbReference>
<dbReference type="EMBL" id="CP000951">
    <property type="protein sequence ID" value="ACB00724.1"/>
    <property type="molecule type" value="Genomic_DNA"/>
</dbReference>
<dbReference type="RefSeq" id="WP_012308342.1">
    <property type="nucleotide sequence ID" value="NZ_JAHHPU010000003.1"/>
</dbReference>
<dbReference type="SMR" id="Q8KX38"/>
<dbReference type="STRING" id="32049.SYNPCC7002_A2750"/>
<dbReference type="KEGG" id="syp:SYNPCC7002_A2750"/>
<dbReference type="eggNOG" id="COG0852">
    <property type="taxonomic scope" value="Bacteria"/>
</dbReference>
<dbReference type="HOGENOM" id="CLU_042628_9_1_3"/>
<dbReference type="Proteomes" id="UP000001688">
    <property type="component" value="Chromosome"/>
</dbReference>
<dbReference type="GO" id="GO:0031676">
    <property type="term" value="C:plasma membrane-derived thylakoid membrane"/>
    <property type="evidence" value="ECO:0007669"/>
    <property type="project" value="UniProtKB-SubCell"/>
</dbReference>
<dbReference type="GO" id="GO:0008137">
    <property type="term" value="F:NADH dehydrogenase (ubiquinone) activity"/>
    <property type="evidence" value="ECO:0007669"/>
    <property type="project" value="InterPro"/>
</dbReference>
<dbReference type="GO" id="GO:0048038">
    <property type="term" value="F:quinone binding"/>
    <property type="evidence" value="ECO:0007669"/>
    <property type="project" value="UniProtKB-KW"/>
</dbReference>
<dbReference type="GO" id="GO:0019684">
    <property type="term" value="P:photosynthesis, light reaction"/>
    <property type="evidence" value="ECO:0007669"/>
    <property type="project" value="UniProtKB-UniRule"/>
</dbReference>
<dbReference type="Gene3D" id="3.30.460.80">
    <property type="entry name" value="NADH:ubiquinone oxidoreductase, 30kDa subunit"/>
    <property type="match status" value="1"/>
</dbReference>
<dbReference type="HAMAP" id="MF_01357">
    <property type="entry name" value="NDH1_NuoC"/>
    <property type="match status" value="1"/>
</dbReference>
<dbReference type="InterPro" id="IPR010218">
    <property type="entry name" value="NADH_DH_suC"/>
</dbReference>
<dbReference type="InterPro" id="IPR037232">
    <property type="entry name" value="NADH_quin_OxRdtase_su_C/D-like"/>
</dbReference>
<dbReference type="InterPro" id="IPR001268">
    <property type="entry name" value="NADH_UbQ_OxRdtase_30kDa_su"/>
</dbReference>
<dbReference type="InterPro" id="IPR020396">
    <property type="entry name" value="NADH_UbQ_OxRdtase_CS"/>
</dbReference>
<dbReference type="NCBIfam" id="NF009141">
    <property type="entry name" value="PRK12494.1"/>
    <property type="match status" value="1"/>
</dbReference>
<dbReference type="PANTHER" id="PTHR10884:SF14">
    <property type="entry name" value="NADH DEHYDROGENASE [UBIQUINONE] IRON-SULFUR PROTEIN 3, MITOCHONDRIAL"/>
    <property type="match status" value="1"/>
</dbReference>
<dbReference type="PANTHER" id="PTHR10884">
    <property type="entry name" value="NADH DEHYDROGENASE UBIQUINONE IRON-SULFUR PROTEIN 3"/>
    <property type="match status" value="1"/>
</dbReference>
<dbReference type="Pfam" id="PF00329">
    <property type="entry name" value="Complex1_30kDa"/>
    <property type="match status" value="1"/>
</dbReference>
<dbReference type="SUPFAM" id="SSF143243">
    <property type="entry name" value="Nqo5-like"/>
    <property type="match status" value="1"/>
</dbReference>
<dbReference type="PROSITE" id="PS00542">
    <property type="entry name" value="COMPLEX1_30K"/>
    <property type="match status" value="1"/>
</dbReference>
<evidence type="ECO:0000255" key="1">
    <source>
        <dbReference type="HAMAP-Rule" id="MF_01357"/>
    </source>
</evidence>
<comment type="function">
    <text evidence="1">NDH-1 shuttles electrons from an unknown electron donor, via FMN and iron-sulfur (Fe-S) centers, to quinones in the respiratory and/or the photosynthetic chain. The immediate electron acceptor for the enzyme in this species is believed to be plastoquinone. Couples the redox reaction to proton translocation, and thus conserves the redox energy in a proton gradient. Cyanobacterial NDH-1 also plays a role in inorganic carbon-concentration.</text>
</comment>
<comment type="catalytic activity">
    <reaction evidence="1">
        <text>a plastoquinone + NADH + (n+1) H(+)(in) = a plastoquinol + NAD(+) + n H(+)(out)</text>
        <dbReference type="Rhea" id="RHEA:42608"/>
        <dbReference type="Rhea" id="RHEA-COMP:9561"/>
        <dbReference type="Rhea" id="RHEA-COMP:9562"/>
        <dbReference type="ChEBI" id="CHEBI:15378"/>
        <dbReference type="ChEBI" id="CHEBI:17757"/>
        <dbReference type="ChEBI" id="CHEBI:57540"/>
        <dbReference type="ChEBI" id="CHEBI:57945"/>
        <dbReference type="ChEBI" id="CHEBI:62192"/>
    </reaction>
</comment>
<comment type="catalytic activity">
    <reaction evidence="1">
        <text>a plastoquinone + NADPH + (n+1) H(+)(in) = a plastoquinol + NADP(+) + n H(+)(out)</text>
        <dbReference type="Rhea" id="RHEA:42612"/>
        <dbReference type="Rhea" id="RHEA-COMP:9561"/>
        <dbReference type="Rhea" id="RHEA-COMP:9562"/>
        <dbReference type="ChEBI" id="CHEBI:15378"/>
        <dbReference type="ChEBI" id="CHEBI:17757"/>
        <dbReference type="ChEBI" id="CHEBI:57783"/>
        <dbReference type="ChEBI" id="CHEBI:58349"/>
        <dbReference type="ChEBI" id="CHEBI:62192"/>
    </reaction>
</comment>
<comment type="subunit">
    <text evidence="1">NDH-1 can be composed of about 15 different subunits; different subcomplexes with different compositions have been identified which probably have different functions.</text>
</comment>
<comment type="subcellular location">
    <subcellularLocation>
        <location evidence="1">Cellular thylakoid membrane</location>
        <topology evidence="1">Peripheral membrane protein</topology>
        <orientation evidence="1">Cytoplasmic side</orientation>
    </subcellularLocation>
</comment>
<comment type="similarity">
    <text evidence="1">Belongs to the complex I 30 kDa subunit family.</text>
</comment>
<accession>Q8KX38</accession>
<gene>
    <name evidence="1" type="primary">ndhJ</name>
    <name type="ordered locus">SYNPCC7002_A2750</name>
</gene>